<organism>
    <name type="scientific">Xylella fastidiosa (strain M12)</name>
    <dbReference type="NCBI Taxonomy" id="405440"/>
    <lineage>
        <taxon>Bacteria</taxon>
        <taxon>Pseudomonadati</taxon>
        <taxon>Pseudomonadota</taxon>
        <taxon>Gammaproteobacteria</taxon>
        <taxon>Lysobacterales</taxon>
        <taxon>Lysobacteraceae</taxon>
        <taxon>Xylella</taxon>
    </lineage>
</organism>
<comment type="function">
    <text evidence="1">Catalyzes the stereoinversion of LL-2,6-diaminopimelate (L,L-DAP) to meso-diaminopimelate (meso-DAP), a precursor of L-lysine and an essential component of the bacterial peptidoglycan.</text>
</comment>
<comment type="catalytic activity">
    <reaction evidence="1">
        <text>(2S,6S)-2,6-diaminopimelate = meso-2,6-diaminopimelate</text>
        <dbReference type="Rhea" id="RHEA:15393"/>
        <dbReference type="ChEBI" id="CHEBI:57609"/>
        <dbReference type="ChEBI" id="CHEBI:57791"/>
        <dbReference type="EC" id="5.1.1.7"/>
    </reaction>
</comment>
<comment type="pathway">
    <text evidence="1">Amino-acid biosynthesis; L-lysine biosynthesis via DAP pathway; DL-2,6-diaminopimelate from LL-2,6-diaminopimelate: step 1/1.</text>
</comment>
<comment type="subunit">
    <text evidence="1">Homodimer.</text>
</comment>
<comment type="subcellular location">
    <subcellularLocation>
        <location evidence="1">Cytoplasm</location>
    </subcellularLocation>
</comment>
<comment type="similarity">
    <text evidence="1">Belongs to the diaminopimelate epimerase family.</text>
</comment>
<proteinExistence type="inferred from homology"/>
<reference key="1">
    <citation type="journal article" date="2010" name="J. Bacteriol.">
        <title>Whole genome sequences of two Xylella fastidiosa strains (M12 and M23) causing almond leaf scorch disease in California.</title>
        <authorList>
            <person name="Chen J."/>
            <person name="Xie G."/>
            <person name="Han S."/>
            <person name="Chertkov O."/>
            <person name="Sims D."/>
            <person name="Civerolo E.L."/>
        </authorList>
    </citation>
    <scope>NUCLEOTIDE SEQUENCE [LARGE SCALE GENOMIC DNA]</scope>
    <source>
        <strain>M12</strain>
    </source>
</reference>
<feature type="chain" id="PRO_1000099273" description="Diaminopimelate epimerase">
    <location>
        <begin position="1"/>
        <end position="284"/>
    </location>
</feature>
<feature type="active site" description="Proton donor" evidence="1">
    <location>
        <position position="82"/>
    </location>
</feature>
<feature type="active site" description="Proton acceptor" evidence="1">
    <location>
        <position position="227"/>
    </location>
</feature>
<feature type="binding site" evidence="1">
    <location>
        <position position="20"/>
    </location>
    <ligand>
        <name>substrate</name>
    </ligand>
</feature>
<feature type="binding site" evidence="1">
    <location>
        <position position="53"/>
    </location>
    <ligand>
        <name>substrate</name>
    </ligand>
</feature>
<feature type="binding site" evidence="1">
    <location>
        <position position="73"/>
    </location>
    <ligand>
        <name>substrate</name>
    </ligand>
</feature>
<feature type="binding site" evidence="1">
    <location>
        <begin position="83"/>
        <end position="84"/>
    </location>
    <ligand>
        <name>substrate</name>
    </ligand>
</feature>
<feature type="binding site" evidence="1">
    <location>
        <position position="167"/>
    </location>
    <ligand>
        <name>substrate</name>
    </ligand>
</feature>
<feature type="binding site" evidence="1">
    <location>
        <position position="200"/>
    </location>
    <ligand>
        <name>substrate</name>
    </ligand>
</feature>
<feature type="binding site" evidence="1">
    <location>
        <begin position="218"/>
        <end position="219"/>
    </location>
    <ligand>
        <name>substrate</name>
    </ligand>
</feature>
<feature type="binding site" evidence="1">
    <location>
        <begin position="228"/>
        <end position="229"/>
    </location>
    <ligand>
        <name>substrate</name>
    </ligand>
</feature>
<feature type="site" description="Could be important to modulate the pK values of the two catalytic cysteine residues" evidence="1">
    <location>
        <position position="169"/>
    </location>
</feature>
<feature type="site" description="Could be important to modulate the pK values of the two catalytic cysteine residues" evidence="1">
    <location>
        <position position="218"/>
    </location>
</feature>
<feature type="site" description="Important for dimerization" evidence="1">
    <location>
        <position position="278"/>
    </location>
</feature>
<accession>B0U6U5</accession>
<sequence length="284" mass="30087">MGVESVRCPLHFTKMQGAGNDFVVLDLRDGTPPPDAALVAWLADRHFGIGCDQVIAIEPPRGVGVVAAYRIWNADGSAAQQCGNGARCVAAWLVRDGSLADEHFLIDSPVQAHSVRCIGKDEYAVEMGLPVFEPERIPLSGFPNACAEYVLSLQGEVLRCGAVSMGNPHAVVEVDLIDVAPVERIGPLLQQHVAFPESVNVGFVQVIDPGLVRLRVYERGAGETLACGSGACAAAVVLMQRGRVGRDVRVVLPGGTLRVQWPVSGGPVTLSGPARCVFDGVWYG</sequence>
<keyword id="KW-0028">Amino-acid biosynthesis</keyword>
<keyword id="KW-0963">Cytoplasm</keyword>
<keyword id="KW-0413">Isomerase</keyword>
<keyword id="KW-0457">Lysine biosynthesis</keyword>
<gene>
    <name evidence="1" type="primary">dapF</name>
    <name type="ordered locus">Xfasm12_0823</name>
</gene>
<protein>
    <recommendedName>
        <fullName evidence="1">Diaminopimelate epimerase</fullName>
        <shortName evidence="1">DAP epimerase</shortName>
        <ecNumber evidence="1">5.1.1.7</ecNumber>
    </recommendedName>
    <alternativeName>
        <fullName evidence="1">PLP-independent amino acid racemase</fullName>
    </alternativeName>
</protein>
<dbReference type="EC" id="5.1.1.7" evidence="1"/>
<dbReference type="EMBL" id="CP000941">
    <property type="protein sequence ID" value="ACA11811.1"/>
    <property type="molecule type" value="Genomic_DNA"/>
</dbReference>
<dbReference type="RefSeq" id="WP_004083719.1">
    <property type="nucleotide sequence ID" value="NC_010513.1"/>
</dbReference>
<dbReference type="SMR" id="B0U6U5"/>
<dbReference type="KEGG" id="xfm:Xfasm12_0823"/>
<dbReference type="HOGENOM" id="CLU_053306_1_1_6"/>
<dbReference type="UniPathway" id="UPA00034">
    <property type="reaction ID" value="UER00025"/>
</dbReference>
<dbReference type="GO" id="GO:0005829">
    <property type="term" value="C:cytosol"/>
    <property type="evidence" value="ECO:0007669"/>
    <property type="project" value="TreeGrafter"/>
</dbReference>
<dbReference type="GO" id="GO:0008837">
    <property type="term" value="F:diaminopimelate epimerase activity"/>
    <property type="evidence" value="ECO:0007669"/>
    <property type="project" value="UniProtKB-UniRule"/>
</dbReference>
<dbReference type="GO" id="GO:0009089">
    <property type="term" value="P:lysine biosynthetic process via diaminopimelate"/>
    <property type="evidence" value="ECO:0007669"/>
    <property type="project" value="UniProtKB-UniRule"/>
</dbReference>
<dbReference type="Gene3D" id="3.10.310.10">
    <property type="entry name" value="Diaminopimelate Epimerase, Chain A, domain 1"/>
    <property type="match status" value="2"/>
</dbReference>
<dbReference type="HAMAP" id="MF_00197">
    <property type="entry name" value="DAP_epimerase"/>
    <property type="match status" value="1"/>
</dbReference>
<dbReference type="InterPro" id="IPR018510">
    <property type="entry name" value="DAP_epimerase_AS"/>
</dbReference>
<dbReference type="InterPro" id="IPR001653">
    <property type="entry name" value="DAP_epimerase_DapF"/>
</dbReference>
<dbReference type="NCBIfam" id="TIGR00652">
    <property type="entry name" value="DapF"/>
    <property type="match status" value="1"/>
</dbReference>
<dbReference type="PANTHER" id="PTHR31689:SF0">
    <property type="entry name" value="DIAMINOPIMELATE EPIMERASE"/>
    <property type="match status" value="1"/>
</dbReference>
<dbReference type="PANTHER" id="PTHR31689">
    <property type="entry name" value="DIAMINOPIMELATE EPIMERASE, CHLOROPLASTIC"/>
    <property type="match status" value="1"/>
</dbReference>
<dbReference type="Pfam" id="PF01678">
    <property type="entry name" value="DAP_epimerase"/>
    <property type="match status" value="2"/>
</dbReference>
<dbReference type="SUPFAM" id="SSF54506">
    <property type="entry name" value="Diaminopimelate epimerase-like"/>
    <property type="match status" value="2"/>
</dbReference>
<dbReference type="PROSITE" id="PS01326">
    <property type="entry name" value="DAP_EPIMERASE"/>
    <property type="match status" value="1"/>
</dbReference>
<evidence type="ECO:0000255" key="1">
    <source>
        <dbReference type="HAMAP-Rule" id="MF_00197"/>
    </source>
</evidence>
<name>DAPF_XYLFM</name>